<reference key="1">
    <citation type="journal article" date="1995" name="Plant Physiol.">
        <title>Multiple isoforms of Arabidopsis casein kinase I combine conserved catalytic domains with variable carboxyl-terminal extensions.</title>
        <authorList>
            <person name="Klimczak L.J."/>
            <person name="Farini D."/>
            <person name="Lin C."/>
            <person name="Ponti D."/>
            <person name="Cashmore A.R."/>
            <person name="Giuliano G."/>
        </authorList>
    </citation>
    <scope>NUCLEOTIDE SEQUENCE [MRNA]</scope>
    <scope>FUNCTION</scope>
    <scope>CATALYTIC ACTIVITY</scope>
    <scope>ACTIVITY REGULATION</scope>
</reference>
<reference key="2">
    <citation type="journal article" date="2000" name="Plant J.">
        <title>Functional identification of an Arabidopsis Snf4 ortholog by screening for heterologous multicopy suppressors of snf4 deficiency in yeast.</title>
        <authorList>
            <person name="Kleinow T."/>
            <person name="Bhalerao R."/>
            <person name="Breuer F."/>
            <person name="Umeda M."/>
            <person name="Salchert K."/>
            <person name="Koncz C."/>
        </authorList>
    </citation>
    <scope>NUCLEOTIDE SEQUENCE [MRNA]</scope>
</reference>
<reference key="3">
    <citation type="journal article" date="2005" name="Plant Cell">
        <title>Plasmodesmal-associated protein kinase in tobacco and Arabidopsis recognizes a subset of non-cell-autonomous proteins.</title>
        <authorList>
            <person name="Lee J.-Y."/>
            <person name="Taoka K."/>
            <person name="Yoo B.-C."/>
            <person name="Ben-Nissan G."/>
            <person name="Kim D.-J."/>
            <person name="Lucas W.J."/>
        </authorList>
    </citation>
    <scope>NUCLEOTIDE SEQUENCE [MRNA]</scope>
    <scope>SUBCELLULAR LOCATION</scope>
</reference>
<reference key="4">
    <citation type="journal article" date="1998" name="Nature">
        <title>Analysis of 1.9 Mb of contiguous sequence from chromosome 4 of Arabidopsis thaliana.</title>
        <authorList>
            <person name="Bevan M."/>
            <person name="Bancroft I."/>
            <person name="Bent E."/>
            <person name="Love K."/>
            <person name="Goodman H.M."/>
            <person name="Dean C."/>
            <person name="Bergkamp R."/>
            <person name="Dirkse W."/>
            <person name="van Staveren M."/>
            <person name="Stiekema W."/>
            <person name="Drost L."/>
            <person name="Ridley P."/>
            <person name="Hudson S.-A."/>
            <person name="Patel K."/>
            <person name="Murphy G."/>
            <person name="Piffanelli P."/>
            <person name="Wedler H."/>
            <person name="Wedler E."/>
            <person name="Wambutt R."/>
            <person name="Weitzenegger T."/>
            <person name="Pohl T."/>
            <person name="Terryn N."/>
            <person name="Gielen J."/>
            <person name="Villarroel R."/>
            <person name="De Clercq R."/>
            <person name="van Montagu M."/>
            <person name="Lecharny A."/>
            <person name="Aubourg S."/>
            <person name="Gy I."/>
            <person name="Kreis M."/>
            <person name="Lao N."/>
            <person name="Kavanagh T."/>
            <person name="Hempel S."/>
            <person name="Kotter P."/>
            <person name="Entian K.-D."/>
            <person name="Rieger M."/>
            <person name="Schaefer M."/>
            <person name="Funk B."/>
            <person name="Mueller-Auer S."/>
            <person name="Silvey M."/>
            <person name="James R."/>
            <person name="Monfort A."/>
            <person name="Pons A."/>
            <person name="Puigdomenech P."/>
            <person name="Douka A."/>
            <person name="Voukelatou E."/>
            <person name="Milioni D."/>
            <person name="Hatzopoulos P."/>
            <person name="Piravandi E."/>
            <person name="Obermaier B."/>
            <person name="Hilbert H."/>
            <person name="Duesterhoeft A."/>
            <person name="Moores T."/>
            <person name="Jones J.D.G."/>
            <person name="Eneva T."/>
            <person name="Palme K."/>
            <person name="Benes V."/>
            <person name="Rechmann S."/>
            <person name="Ansorge W."/>
            <person name="Cooke R."/>
            <person name="Berger C."/>
            <person name="Delseny M."/>
            <person name="Voet M."/>
            <person name="Volckaert G."/>
            <person name="Mewes H.-W."/>
            <person name="Klosterman S."/>
            <person name="Schueller C."/>
            <person name="Chalwatzis N."/>
        </authorList>
    </citation>
    <scope>NUCLEOTIDE SEQUENCE [LARGE SCALE GENOMIC DNA]</scope>
    <source>
        <strain>cv. Columbia</strain>
    </source>
</reference>
<reference key="5">
    <citation type="journal article" date="1999" name="Nature">
        <title>Sequence and analysis of chromosome 4 of the plant Arabidopsis thaliana.</title>
        <authorList>
            <person name="Mayer K.F.X."/>
            <person name="Schueller C."/>
            <person name="Wambutt R."/>
            <person name="Murphy G."/>
            <person name="Volckaert G."/>
            <person name="Pohl T."/>
            <person name="Duesterhoeft A."/>
            <person name="Stiekema W."/>
            <person name="Entian K.-D."/>
            <person name="Terryn N."/>
            <person name="Harris B."/>
            <person name="Ansorge W."/>
            <person name="Brandt P."/>
            <person name="Grivell L.A."/>
            <person name="Rieger M."/>
            <person name="Weichselgartner M."/>
            <person name="de Simone V."/>
            <person name="Obermaier B."/>
            <person name="Mache R."/>
            <person name="Mueller M."/>
            <person name="Kreis M."/>
            <person name="Delseny M."/>
            <person name="Puigdomenech P."/>
            <person name="Watson M."/>
            <person name="Schmidtheini T."/>
            <person name="Reichert B."/>
            <person name="Portetelle D."/>
            <person name="Perez-Alonso M."/>
            <person name="Boutry M."/>
            <person name="Bancroft I."/>
            <person name="Vos P."/>
            <person name="Hoheisel J."/>
            <person name="Zimmermann W."/>
            <person name="Wedler H."/>
            <person name="Ridley P."/>
            <person name="Langham S.-A."/>
            <person name="McCullagh B."/>
            <person name="Bilham L."/>
            <person name="Robben J."/>
            <person name="van der Schueren J."/>
            <person name="Grymonprez B."/>
            <person name="Chuang Y.-J."/>
            <person name="Vandenbussche F."/>
            <person name="Braeken M."/>
            <person name="Weltjens I."/>
            <person name="Voet M."/>
            <person name="Bastiaens I."/>
            <person name="Aert R."/>
            <person name="Defoor E."/>
            <person name="Weitzenegger T."/>
            <person name="Bothe G."/>
            <person name="Ramsperger U."/>
            <person name="Hilbert H."/>
            <person name="Braun M."/>
            <person name="Holzer E."/>
            <person name="Brandt A."/>
            <person name="Peters S."/>
            <person name="van Staveren M."/>
            <person name="Dirkse W."/>
            <person name="Mooijman P."/>
            <person name="Klein Lankhorst R."/>
            <person name="Rose M."/>
            <person name="Hauf J."/>
            <person name="Koetter P."/>
            <person name="Berneiser S."/>
            <person name="Hempel S."/>
            <person name="Feldpausch M."/>
            <person name="Lamberth S."/>
            <person name="Van den Daele H."/>
            <person name="De Keyser A."/>
            <person name="Buysshaert C."/>
            <person name="Gielen J."/>
            <person name="Villarroel R."/>
            <person name="De Clercq R."/>
            <person name="van Montagu M."/>
            <person name="Rogers J."/>
            <person name="Cronin A."/>
            <person name="Quail M.A."/>
            <person name="Bray-Allen S."/>
            <person name="Clark L."/>
            <person name="Doggett J."/>
            <person name="Hall S."/>
            <person name="Kay M."/>
            <person name="Lennard N."/>
            <person name="McLay K."/>
            <person name="Mayes R."/>
            <person name="Pettett A."/>
            <person name="Rajandream M.A."/>
            <person name="Lyne M."/>
            <person name="Benes V."/>
            <person name="Rechmann S."/>
            <person name="Borkova D."/>
            <person name="Bloecker H."/>
            <person name="Scharfe M."/>
            <person name="Grimm M."/>
            <person name="Loehnert T.-H."/>
            <person name="Dose S."/>
            <person name="de Haan M."/>
            <person name="Maarse A.C."/>
            <person name="Schaefer M."/>
            <person name="Mueller-Auer S."/>
            <person name="Gabel C."/>
            <person name="Fuchs M."/>
            <person name="Fartmann B."/>
            <person name="Granderath K."/>
            <person name="Dauner D."/>
            <person name="Herzl A."/>
            <person name="Neumann S."/>
            <person name="Argiriou A."/>
            <person name="Vitale D."/>
            <person name="Liguori R."/>
            <person name="Piravandi E."/>
            <person name="Massenet O."/>
            <person name="Quigley F."/>
            <person name="Clabauld G."/>
            <person name="Muendlein A."/>
            <person name="Felber R."/>
            <person name="Schnabl S."/>
            <person name="Hiller R."/>
            <person name="Schmidt W."/>
            <person name="Lecharny A."/>
            <person name="Aubourg S."/>
            <person name="Chefdor F."/>
            <person name="Cooke R."/>
            <person name="Berger C."/>
            <person name="Monfort A."/>
            <person name="Casacuberta E."/>
            <person name="Gibbons T."/>
            <person name="Weber N."/>
            <person name="Vandenbol M."/>
            <person name="Bargues M."/>
            <person name="Terol J."/>
            <person name="Torres A."/>
            <person name="Perez-Perez A."/>
            <person name="Purnelle B."/>
            <person name="Bent E."/>
            <person name="Johnson S."/>
            <person name="Tacon D."/>
            <person name="Jesse T."/>
            <person name="Heijnen L."/>
            <person name="Schwarz S."/>
            <person name="Scholler P."/>
            <person name="Heber S."/>
            <person name="Francs P."/>
            <person name="Bielke C."/>
            <person name="Frishman D."/>
            <person name="Haase D."/>
            <person name="Lemcke K."/>
            <person name="Mewes H.-W."/>
            <person name="Stocker S."/>
            <person name="Zaccaria P."/>
            <person name="Bevan M."/>
            <person name="Wilson R.K."/>
            <person name="de la Bastide M."/>
            <person name="Habermann K."/>
            <person name="Parnell L."/>
            <person name="Dedhia N."/>
            <person name="Gnoj L."/>
            <person name="Schutz K."/>
            <person name="Huang E."/>
            <person name="Spiegel L."/>
            <person name="Sekhon M."/>
            <person name="Murray J."/>
            <person name="Sheet P."/>
            <person name="Cordes M."/>
            <person name="Abu-Threideh J."/>
            <person name="Stoneking T."/>
            <person name="Kalicki J."/>
            <person name="Graves T."/>
            <person name="Harmon G."/>
            <person name="Edwards J."/>
            <person name="Latreille P."/>
            <person name="Courtney L."/>
            <person name="Cloud J."/>
            <person name="Abbott A."/>
            <person name="Scott K."/>
            <person name="Johnson D."/>
            <person name="Minx P."/>
            <person name="Bentley D."/>
            <person name="Fulton B."/>
            <person name="Miller N."/>
            <person name="Greco T."/>
            <person name="Kemp K."/>
            <person name="Kramer J."/>
            <person name="Fulton L."/>
            <person name="Mardis E."/>
            <person name="Dante M."/>
            <person name="Pepin K."/>
            <person name="Hillier L.W."/>
            <person name="Nelson J."/>
            <person name="Spieth J."/>
            <person name="Ryan E."/>
            <person name="Andrews S."/>
            <person name="Geisel C."/>
            <person name="Layman D."/>
            <person name="Du H."/>
            <person name="Ali J."/>
            <person name="Berghoff A."/>
            <person name="Jones K."/>
            <person name="Drone K."/>
            <person name="Cotton M."/>
            <person name="Joshu C."/>
            <person name="Antonoiu B."/>
            <person name="Zidanic M."/>
            <person name="Strong C."/>
            <person name="Sun H."/>
            <person name="Lamar B."/>
            <person name="Yordan C."/>
            <person name="Ma P."/>
            <person name="Zhong J."/>
            <person name="Preston R."/>
            <person name="Vil D."/>
            <person name="Shekher M."/>
            <person name="Matero A."/>
            <person name="Shah R."/>
            <person name="Swaby I.K."/>
            <person name="O'Shaughnessy A."/>
            <person name="Rodriguez M."/>
            <person name="Hoffman J."/>
            <person name="Till S."/>
            <person name="Granat S."/>
            <person name="Shohdy N."/>
            <person name="Hasegawa A."/>
            <person name="Hameed A."/>
            <person name="Lodhi M."/>
            <person name="Johnson A."/>
            <person name="Chen E."/>
            <person name="Marra M.A."/>
            <person name="Martienssen R."/>
            <person name="McCombie W.R."/>
        </authorList>
    </citation>
    <scope>NUCLEOTIDE SEQUENCE [LARGE SCALE GENOMIC DNA]</scope>
    <source>
        <strain>cv. Columbia</strain>
    </source>
</reference>
<reference key="6">
    <citation type="journal article" date="2017" name="Plant J.">
        <title>Araport11: a complete reannotation of the Arabidopsis thaliana reference genome.</title>
        <authorList>
            <person name="Cheng C.Y."/>
            <person name="Krishnakumar V."/>
            <person name="Chan A.P."/>
            <person name="Thibaud-Nissen F."/>
            <person name="Schobel S."/>
            <person name="Town C.D."/>
        </authorList>
    </citation>
    <scope>GENOME REANNOTATION</scope>
    <source>
        <strain>cv. Columbia</strain>
    </source>
</reference>
<reference key="7">
    <citation type="journal article" date="2003" name="Science">
        <title>Empirical analysis of transcriptional activity in the Arabidopsis genome.</title>
        <authorList>
            <person name="Yamada K."/>
            <person name="Lim J."/>
            <person name="Dale J.M."/>
            <person name="Chen H."/>
            <person name="Shinn P."/>
            <person name="Palm C.J."/>
            <person name="Southwick A.M."/>
            <person name="Wu H.C."/>
            <person name="Kim C.J."/>
            <person name="Nguyen M."/>
            <person name="Pham P.K."/>
            <person name="Cheuk R.F."/>
            <person name="Karlin-Newmann G."/>
            <person name="Liu S.X."/>
            <person name="Lam B."/>
            <person name="Sakano H."/>
            <person name="Wu T."/>
            <person name="Yu G."/>
            <person name="Miranda M."/>
            <person name="Quach H.L."/>
            <person name="Tripp M."/>
            <person name="Chang C.H."/>
            <person name="Lee J.M."/>
            <person name="Toriumi M.J."/>
            <person name="Chan M.M."/>
            <person name="Tang C.C."/>
            <person name="Onodera C.S."/>
            <person name="Deng J.M."/>
            <person name="Akiyama K."/>
            <person name="Ansari Y."/>
            <person name="Arakawa T."/>
            <person name="Banh J."/>
            <person name="Banno F."/>
            <person name="Bowser L."/>
            <person name="Brooks S.Y."/>
            <person name="Carninci P."/>
            <person name="Chao Q."/>
            <person name="Choy N."/>
            <person name="Enju A."/>
            <person name="Goldsmith A.D."/>
            <person name="Gurjal M."/>
            <person name="Hansen N.F."/>
            <person name="Hayashizaki Y."/>
            <person name="Johnson-Hopson C."/>
            <person name="Hsuan V.W."/>
            <person name="Iida K."/>
            <person name="Karnes M."/>
            <person name="Khan S."/>
            <person name="Koesema E."/>
            <person name="Ishida J."/>
            <person name="Jiang P.X."/>
            <person name="Jones T."/>
            <person name="Kawai J."/>
            <person name="Kamiya A."/>
            <person name="Meyers C."/>
            <person name="Nakajima M."/>
            <person name="Narusaka M."/>
            <person name="Seki M."/>
            <person name="Sakurai T."/>
            <person name="Satou M."/>
            <person name="Tamse R."/>
            <person name="Vaysberg M."/>
            <person name="Wallender E.K."/>
            <person name="Wong C."/>
            <person name="Yamamura Y."/>
            <person name="Yuan S."/>
            <person name="Shinozaki K."/>
            <person name="Davis R.W."/>
            <person name="Theologis A."/>
            <person name="Ecker J.R."/>
        </authorList>
    </citation>
    <scope>NUCLEOTIDE SEQUENCE [LARGE SCALE MRNA]</scope>
    <source>
        <strain>cv. Columbia</strain>
    </source>
</reference>
<comment type="function">
    <text evidence="5">Casein kinases are operationally defined by their preferential utilization of acidic proteins such as caseins as substrates. Can phosphorylate casein, phosvitin, myosin light chains and poly(Glu,Tyr) in vitro.</text>
</comment>
<comment type="catalytic activity">
    <reaction evidence="8">
        <text>L-seryl-[protein] + ATP = O-phospho-L-seryl-[protein] + ADP + H(+)</text>
        <dbReference type="Rhea" id="RHEA:17989"/>
        <dbReference type="Rhea" id="RHEA-COMP:9863"/>
        <dbReference type="Rhea" id="RHEA-COMP:11604"/>
        <dbReference type="ChEBI" id="CHEBI:15378"/>
        <dbReference type="ChEBI" id="CHEBI:29999"/>
        <dbReference type="ChEBI" id="CHEBI:30616"/>
        <dbReference type="ChEBI" id="CHEBI:83421"/>
        <dbReference type="ChEBI" id="CHEBI:456216"/>
        <dbReference type="EC" id="2.7.11.1"/>
    </reaction>
</comment>
<comment type="catalytic activity">
    <reaction evidence="8">
        <text>L-threonyl-[protein] + ATP = O-phospho-L-threonyl-[protein] + ADP + H(+)</text>
        <dbReference type="Rhea" id="RHEA:46608"/>
        <dbReference type="Rhea" id="RHEA-COMP:11060"/>
        <dbReference type="Rhea" id="RHEA-COMP:11605"/>
        <dbReference type="ChEBI" id="CHEBI:15378"/>
        <dbReference type="ChEBI" id="CHEBI:30013"/>
        <dbReference type="ChEBI" id="CHEBI:30616"/>
        <dbReference type="ChEBI" id="CHEBI:61977"/>
        <dbReference type="ChEBI" id="CHEBI:456216"/>
        <dbReference type="EC" id="2.7.11.1"/>
    </reaction>
</comment>
<comment type="activity regulation">
    <text evidence="5">Partially inhibited by N-(2-aminoethyl)-5-chloroisoquinoline-8-sulfonamide (CKI-7).</text>
</comment>
<comment type="subunit">
    <text evidence="1">Monomer.</text>
</comment>
<comment type="subcellular location">
    <subcellularLocation>
        <location evidence="4">Cytoplasm</location>
    </subcellularLocation>
    <subcellularLocation>
        <location evidence="4">Nucleus</location>
    </subcellularLocation>
</comment>
<comment type="PTM">
    <text evidence="1">Autophosphorylated.</text>
</comment>
<comment type="similarity">
    <text evidence="8">Belongs to the protein kinase superfamily. CK1 Ser/Thr protein kinase family. Casein kinase I subfamily.</text>
</comment>
<gene>
    <name evidence="6" type="primary">CKL11</name>
    <name evidence="7" type="synonym">CKI1</name>
    <name evidence="9" type="ordered locus">At4g14340</name>
    <name evidence="10" type="ORF">dl3210c</name>
</gene>
<dbReference type="EC" id="2.7.11.1" evidence="5"/>
<dbReference type="EMBL" id="X78818">
    <property type="protein sequence ID" value="CAA55395.1"/>
    <property type="molecule type" value="mRNA"/>
</dbReference>
<dbReference type="EMBL" id="AF250343">
    <property type="protein sequence ID" value="AAG10149.1"/>
    <property type="molecule type" value="mRNA"/>
</dbReference>
<dbReference type="EMBL" id="AY943850">
    <property type="protein sequence ID" value="AAY24540.1"/>
    <property type="molecule type" value="mRNA"/>
</dbReference>
<dbReference type="EMBL" id="Z97336">
    <property type="protein sequence ID" value="CAB10213.1"/>
    <property type="molecule type" value="Genomic_DNA"/>
</dbReference>
<dbReference type="EMBL" id="AL161538">
    <property type="protein sequence ID" value="CAB78476.1"/>
    <property type="molecule type" value="Genomic_DNA"/>
</dbReference>
<dbReference type="EMBL" id="CP002687">
    <property type="protein sequence ID" value="AEE83421.1"/>
    <property type="molecule type" value="Genomic_DNA"/>
</dbReference>
<dbReference type="EMBL" id="AY052364">
    <property type="protein sequence ID" value="AAK96555.1"/>
    <property type="molecule type" value="mRNA"/>
</dbReference>
<dbReference type="EMBL" id="AY060528">
    <property type="protein sequence ID" value="AAL31141.1"/>
    <property type="molecule type" value="mRNA"/>
</dbReference>
<dbReference type="PIR" id="C71405">
    <property type="entry name" value="C71405"/>
</dbReference>
<dbReference type="RefSeq" id="NP_193170.1">
    <property type="nucleotide sequence ID" value="NM_117511.5"/>
</dbReference>
<dbReference type="SMR" id="Q39050"/>
<dbReference type="FunCoup" id="Q39050">
    <property type="interactions" value="4909"/>
</dbReference>
<dbReference type="IntAct" id="Q39050">
    <property type="interactions" value="8"/>
</dbReference>
<dbReference type="STRING" id="3702.Q39050"/>
<dbReference type="iPTMnet" id="Q39050"/>
<dbReference type="PaxDb" id="3702-AT4G14340.1"/>
<dbReference type="ProteomicsDB" id="246871"/>
<dbReference type="EnsemblPlants" id="AT4G14340.1">
    <property type="protein sequence ID" value="AT4G14340.1"/>
    <property type="gene ID" value="AT4G14340"/>
</dbReference>
<dbReference type="GeneID" id="827076"/>
<dbReference type="Gramene" id="AT4G14340.1">
    <property type="protein sequence ID" value="AT4G14340.1"/>
    <property type="gene ID" value="AT4G14340"/>
</dbReference>
<dbReference type="KEGG" id="ath:AT4G14340"/>
<dbReference type="Araport" id="AT4G14340"/>
<dbReference type="TAIR" id="AT4G14340">
    <property type="gene designation" value="CKI1"/>
</dbReference>
<dbReference type="eggNOG" id="KOG1164">
    <property type="taxonomic scope" value="Eukaryota"/>
</dbReference>
<dbReference type="HOGENOM" id="CLU_019279_0_2_1"/>
<dbReference type="InParanoid" id="Q39050"/>
<dbReference type="OrthoDB" id="5800476at2759"/>
<dbReference type="PhylomeDB" id="Q39050"/>
<dbReference type="PRO" id="PR:Q39050"/>
<dbReference type="Proteomes" id="UP000006548">
    <property type="component" value="Chromosome 4"/>
</dbReference>
<dbReference type="ExpressionAtlas" id="Q39050">
    <property type="expression patterns" value="baseline and differential"/>
</dbReference>
<dbReference type="GO" id="GO:0005737">
    <property type="term" value="C:cytoplasm"/>
    <property type="evidence" value="ECO:0000314"/>
    <property type="project" value="TAIR"/>
</dbReference>
<dbReference type="GO" id="GO:0005634">
    <property type="term" value="C:nucleus"/>
    <property type="evidence" value="ECO:0000314"/>
    <property type="project" value="TAIR"/>
</dbReference>
<dbReference type="GO" id="GO:0005524">
    <property type="term" value="F:ATP binding"/>
    <property type="evidence" value="ECO:0007669"/>
    <property type="project" value="UniProtKB-KW"/>
</dbReference>
<dbReference type="GO" id="GO:0106310">
    <property type="term" value="F:protein serine kinase activity"/>
    <property type="evidence" value="ECO:0007669"/>
    <property type="project" value="RHEA"/>
</dbReference>
<dbReference type="GO" id="GO:0004674">
    <property type="term" value="F:protein serine/threonine kinase activity"/>
    <property type="evidence" value="ECO:0000314"/>
    <property type="project" value="TAIR"/>
</dbReference>
<dbReference type="GO" id="GO:0016310">
    <property type="term" value="P:phosphorylation"/>
    <property type="evidence" value="ECO:0000304"/>
    <property type="project" value="TAIR"/>
</dbReference>
<dbReference type="GO" id="GO:0046777">
    <property type="term" value="P:protein autophosphorylation"/>
    <property type="evidence" value="ECO:0007005"/>
    <property type="project" value="TAIR"/>
</dbReference>
<dbReference type="CDD" id="cd14125">
    <property type="entry name" value="STKc_CK1_delta_epsilon"/>
    <property type="match status" value="1"/>
</dbReference>
<dbReference type="FunFam" id="1.10.510.10:FF:000164">
    <property type="entry name" value="Casein kinase 1-like protein"/>
    <property type="match status" value="1"/>
</dbReference>
<dbReference type="FunFam" id="3.30.200.20:FF:000538">
    <property type="entry name" value="Putative Casein kinase I"/>
    <property type="match status" value="1"/>
</dbReference>
<dbReference type="Gene3D" id="1.10.510.10">
    <property type="entry name" value="Transferase(Phosphotransferase) domain 1"/>
    <property type="match status" value="1"/>
</dbReference>
<dbReference type="InterPro" id="IPR050235">
    <property type="entry name" value="CK1_Ser-Thr_kinase"/>
</dbReference>
<dbReference type="InterPro" id="IPR011009">
    <property type="entry name" value="Kinase-like_dom_sf"/>
</dbReference>
<dbReference type="InterPro" id="IPR000719">
    <property type="entry name" value="Prot_kinase_dom"/>
</dbReference>
<dbReference type="InterPro" id="IPR017441">
    <property type="entry name" value="Protein_kinase_ATP_BS"/>
</dbReference>
<dbReference type="InterPro" id="IPR008271">
    <property type="entry name" value="Ser/Thr_kinase_AS"/>
</dbReference>
<dbReference type="PANTHER" id="PTHR11909">
    <property type="entry name" value="CASEIN KINASE-RELATED"/>
    <property type="match status" value="1"/>
</dbReference>
<dbReference type="Pfam" id="PF00069">
    <property type="entry name" value="Pkinase"/>
    <property type="match status" value="1"/>
</dbReference>
<dbReference type="SMART" id="SM00220">
    <property type="entry name" value="S_TKc"/>
    <property type="match status" value="1"/>
</dbReference>
<dbReference type="SUPFAM" id="SSF56112">
    <property type="entry name" value="Protein kinase-like (PK-like)"/>
    <property type="match status" value="1"/>
</dbReference>
<dbReference type="PROSITE" id="PS00107">
    <property type="entry name" value="PROTEIN_KINASE_ATP"/>
    <property type="match status" value="1"/>
</dbReference>
<dbReference type="PROSITE" id="PS50011">
    <property type="entry name" value="PROTEIN_KINASE_DOM"/>
    <property type="match status" value="1"/>
</dbReference>
<dbReference type="PROSITE" id="PS00108">
    <property type="entry name" value="PROTEIN_KINASE_ST"/>
    <property type="match status" value="1"/>
</dbReference>
<feature type="chain" id="PRO_0000437150" description="Casein kinase 1-like protein 11">
    <location>
        <begin position="1"/>
        <end position="457"/>
    </location>
</feature>
<feature type="domain" description="Protein kinase" evidence="2">
    <location>
        <begin position="15"/>
        <end position="284"/>
    </location>
</feature>
<feature type="region of interest" description="Disordered" evidence="3">
    <location>
        <begin position="305"/>
        <end position="337"/>
    </location>
</feature>
<feature type="region of interest" description="Disordered" evidence="3">
    <location>
        <begin position="352"/>
        <end position="442"/>
    </location>
</feature>
<feature type="compositionally biased region" description="Pro residues" evidence="3">
    <location>
        <begin position="311"/>
        <end position="324"/>
    </location>
</feature>
<feature type="compositionally biased region" description="Polar residues" evidence="3">
    <location>
        <begin position="383"/>
        <end position="403"/>
    </location>
</feature>
<feature type="compositionally biased region" description="Polar residues" evidence="3">
    <location>
        <begin position="409"/>
        <end position="429"/>
    </location>
</feature>
<feature type="active site" description="Proton acceptor" evidence="2">
    <location>
        <position position="134"/>
    </location>
</feature>
<feature type="binding site" evidence="2">
    <location>
        <begin position="21"/>
        <end position="29"/>
    </location>
    <ligand>
        <name>ATP</name>
        <dbReference type="ChEBI" id="CHEBI:30616"/>
    </ligand>
</feature>
<feature type="binding site" evidence="2">
    <location>
        <position position="44"/>
    </location>
    <ligand>
        <name>ATP</name>
        <dbReference type="ChEBI" id="CHEBI:30616"/>
    </ligand>
</feature>
<accession>Q39050</accession>
<evidence type="ECO:0000250" key="1">
    <source>
        <dbReference type="UniProtKB" id="P48730"/>
    </source>
</evidence>
<evidence type="ECO:0000255" key="2">
    <source>
        <dbReference type="PROSITE-ProRule" id="PRU00159"/>
    </source>
</evidence>
<evidence type="ECO:0000256" key="3">
    <source>
        <dbReference type="SAM" id="MobiDB-lite"/>
    </source>
</evidence>
<evidence type="ECO:0000269" key="4">
    <source>
    </source>
</evidence>
<evidence type="ECO:0000269" key="5">
    <source>
    </source>
</evidence>
<evidence type="ECO:0000303" key="6">
    <source>
    </source>
</evidence>
<evidence type="ECO:0000303" key="7">
    <source>
    </source>
</evidence>
<evidence type="ECO:0000305" key="8"/>
<evidence type="ECO:0000312" key="9">
    <source>
        <dbReference type="Araport" id="AT4G14340"/>
    </source>
</evidence>
<evidence type="ECO:0000312" key="10">
    <source>
        <dbReference type="EMBL" id="CAB10213.1"/>
    </source>
</evidence>
<keyword id="KW-0067">ATP-binding</keyword>
<keyword id="KW-0963">Cytoplasm</keyword>
<keyword id="KW-0418">Kinase</keyword>
<keyword id="KW-0547">Nucleotide-binding</keyword>
<keyword id="KW-0539">Nucleus</keyword>
<keyword id="KW-1185">Reference proteome</keyword>
<keyword id="KW-0723">Serine/threonine-protein kinase</keyword>
<keyword id="KW-0808">Transferase</keyword>
<sequence length="457" mass="51953">MDRNQKMDHVIGGKFKLGRKLGSGSFGELYLGINIQTGEEVAVKLEPVKTRHPQLQYESKIYMFLQGGTGVPHLKWFGVEGEYSCMVIDLLGPSLEDLFNYCKRIFSLKSVLMLADQLICRVEYMHSRGFLHRDIKPDNFLMGLGRRANQVYIIDYGLAKKYKDLQTQKHIPYRENKNLTGTARYASVNTHLGIEQSRRDDLESLGYVLMYFLRGSLPWQGLKAGTKKQKYDKISEKKMLTSVETLCKSYPSEFTSYFHYCRSLRFEDKPDYSYLRRLFRDLFIREGYQLDYVFDWTISKYPQIGSSSRPRPTPRPALDPPGPPAERAEKPTVGQDLRGRFTGAIEAFTRRNVSSQGALGDRSRHRSSDDIPSSAKEVHESRNGSTSKRGVISSTRPGSSAEPSENHSSRLFSSGSRHATTQRVPQSYESAAAARPGHEDAIRNFELLTIGSGKKRK</sequence>
<proteinExistence type="evidence at protein level"/>
<organism>
    <name type="scientific">Arabidopsis thaliana</name>
    <name type="common">Mouse-ear cress</name>
    <dbReference type="NCBI Taxonomy" id="3702"/>
    <lineage>
        <taxon>Eukaryota</taxon>
        <taxon>Viridiplantae</taxon>
        <taxon>Streptophyta</taxon>
        <taxon>Embryophyta</taxon>
        <taxon>Tracheophyta</taxon>
        <taxon>Spermatophyta</taxon>
        <taxon>Magnoliopsida</taxon>
        <taxon>eudicotyledons</taxon>
        <taxon>Gunneridae</taxon>
        <taxon>Pentapetalae</taxon>
        <taxon>rosids</taxon>
        <taxon>malvids</taxon>
        <taxon>Brassicales</taxon>
        <taxon>Brassicaceae</taxon>
        <taxon>Camelineae</taxon>
        <taxon>Arabidopsis</taxon>
    </lineage>
</organism>
<protein>
    <recommendedName>
        <fullName evidence="8">Casein kinase 1-like protein 11</fullName>
        <ecNumber evidence="5">2.7.11.1</ecNumber>
    </recommendedName>
    <alternativeName>
        <fullName evidence="6">Protein CASEIN KINASE I-LIKE 11</fullName>
    </alternativeName>
</protein>
<name>CKL11_ARATH</name>